<evidence type="ECO:0000250" key="1">
    <source>
        <dbReference type="UniProtKB" id="P82875"/>
    </source>
</evidence>
<evidence type="ECO:0000269" key="2">
    <source>
    </source>
</evidence>
<evidence type="ECO:0000305" key="3"/>
<keyword id="KW-0878">Amphibian defense peptide</keyword>
<keyword id="KW-0044">Antibiotic</keyword>
<keyword id="KW-0929">Antimicrobial</keyword>
<keyword id="KW-0903">Direct protein sequencing</keyword>
<keyword id="KW-1015">Disulfide bond</keyword>
<keyword id="KW-0964">Secreted</keyword>
<sequence>ALFSILRGLKKLGKMGQAFVNCEIYKKC</sequence>
<feature type="peptide" id="PRO_0000043818" description="Palustrin-1a">
    <location>
        <begin position="1"/>
        <end position="28"/>
    </location>
</feature>
<feature type="disulfide bond" evidence="1">
    <location>
        <begin position="22"/>
        <end position="28"/>
    </location>
</feature>
<organism>
    <name type="scientific">Lithobates palustris</name>
    <name type="common">Pickerel frog</name>
    <name type="synonym">Rana palustris</name>
    <dbReference type="NCBI Taxonomy" id="298395"/>
    <lineage>
        <taxon>Eukaryota</taxon>
        <taxon>Metazoa</taxon>
        <taxon>Chordata</taxon>
        <taxon>Craniata</taxon>
        <taxon>Vertebrata</taxon>
        <taxon>Euteleostomi</taxon>
        <taxon>Amphibia</taxon>
        <taxon>Batrachia</taxon>
        <taxon>Anura</taxon>
        <taxon>Neobatrachia</taxon>
        <taxon>Ranoidea</taxon>
        <taxon>Ranidae</taxon>
        <taxon>Lithobates</taxon>
    </lineage>
</organism>
<accession>P84274</accession>
<name>PA1A_LITPA</name>
<proteinExistence type="evidence at protein level"/>
<protein>
    <recommendedName>
        <fullName>Palustrin-1a</fullName>
    </recommendedName>
</protein>
<dbReference type="GO" id="GO:0005576">
    <property type="term" value="C:extracellular region"/>
    <property type="evidence" value="ECO:0000314"/>
    <property type="project" value="UniProtKB"/>
</dbReference>
<dbReference type="GO" id="GO:0050829">
    <property type="term" value="P:defense response to Gram-negative bacterium"/>
    <property type="evidence" value="ECO:0000314"/>
    <property type="project" value="UniProtKB"/>
</dbReference>
<dbReference type="InterPro" id="IPR012521">
    <property type="entry name" value="Antimicrobial_frog_2"/>
</dbReference>
<dbReference type="Pfam" id="PF08023">
    <property type="entry name" value="Antimicrobial_2"/>
    <property type="match status" value="1"/>
</dbReference>
<comment type="function">
    <text evidence="2">Antimicrobial activity against Gram-negative bacterium E.coli.</text>
</comment>
<comment type="subcellular location">
    <subcellularLocation>
        <location evidence="2">Secreted</location>
    </subcellularLocation>
</comment>
<comment type="tissue specificity">
    <text evidence="2">Expressed by the skin glands.</text>
</comment>
<comment type="mass spectrometry"/>
<comment type="similarity">
    <text evidence="2">Belongs to the frog skin active peptide (FSAP) family. Brevinin subfamily.</text>
</comment>
<reference evidence="3" key="1">
    <citation type="journal article" date="2000" name="Biochim. Biophys. Acta">
        <title>Multiple antimicrobial peptides and peptides related to bradykinin and neuromedin N isolated from skin secretions of the pickerel frog, Rana palustris.</title>
        <authorList>
            <person name="Basir Y.J."/>
            <person name="Knoop F.C."/>
            <person name="Dulka J."/>
            <person name="Conlon J.M."/>
        </authorList>
    </citation>
    <scope>PROTEIN SEQUENCE</scope>
    <scope>FUNCTION</scope>
    <scope>SUBCELLULAR LOCATION</scope>
    <scope>TISSUE SPECIFICITY</scope>
    <scope>MASS SPECTROMETRY</scope>
    <source>
        <tissue evidence="2">Skin secretion</tissue>
    </source>
</reference>